<dbReference type="EMBL" id="M26142">
    <property type="protein sequence ID" value="AAA30471.1"/>
    <property type="molecule type" value="mRNA"/>
</dbReference>
<dbReference type="PIR" id="A29656">
    <property type="entry name" value="CYBOA"/>
</dbReference>
<dbReference type="RefSeq" id="NP_776714.1">
    <property type="nucleotide sequence ID" value="NM_174289.2"/>
</dbReference>
<dbReference type="PDB" id="3L1E">
    <property type="method" value="X-ray"/>
    <property type="resolution" value="1.15 A"/>
    <property type="chains" value="A=59-163"/>
</dbReference>
<dbReference type="PDB" id="3L1F">
    <property type="method" value="X-ray"/>
    <property type="resolution" value="1.53 A"/>
    <property type="chains" value="A=62-163"/>
</dbReference>
<dbReference type="PDBsum" id="3L1E"/>
<dbReference type="PDBsum" id="3L1F"/>
<dbReference type="BMRB" id="P02470"/>
<dbReference type="EMDB" id="EMD-7969"/>
<dbReference type="SMR" id="P02470"/>
<dbReference type="DIP" id="DIP-58566N"/>
<dbReference type="FunCoup" id="P02470">
    <property type="interactions" value="210"/>
</dbReference>
<dbReference type="IntAct" id="P02470">
    <property type="interactions" value="1"/>
</dbReference>
<dbReference type="STRING" id="9913.ENSBTAP00000004073"/>
<dbReference type="CarbonylDB" id="P02470"/>
<dbReference type="GlyConnect" id="32">
    <property type="glycosylation" value="1 O-GlcNAc glycan (1 site)"/>
</dbReference>
<dbReference type="GlyConnect" id="35">
    <property type="glycosylation" value="1 O-GlcNAc glycan (1 site)"/>
</dbReference>
<dbReference type="GlyConnect" id="36">
    <property type="glycosylation" value="1 O-GlcNAc glycan (1 site)"/>
</dbReference>
<dbReference type="GlyCosmos" id="P02470">
    <property type="glycosylation" value="3 sites, 1 glycan"/>
</dbReference>
<dbReference type="GlyGen" id="P02470">
    <property type="glycosylation" value="2 sites, 1 O-linked glycan (2 sites)"/>
</dbReference>
<dbReference type="iPTMnet" id="P02470"/>
<dbReference type="PaxDb" id="9913-ENSBTAP00000004073"/>
<dbReference type="Ensembl" id="ENSBTAT00000004073.4">
    <property type="protein sequence ID" value="ENSBTAP00000004073.3"/>
    <property type="gene ID" value="ENSBTAG00000003134.4"/>
</dbReference>
<dbReference type="GeneID" id="281718"/>
<dbReference type="KEGG" id="bta:281718"/>
<dbReference type="CTD" id="1409"/>
<dbReference type="VEuPathDB" id="HostDB:ENSBTAG00000003134"/>
<dbReference type="eggNOG" id="KOG3591">
    <property type="taxonomic scope" value="Eukaryota"/>
</dbReference>
<dbReference type="GeneTree" id="ENSGT00940000160159"/>
<dbReference type="HOGENOM" id="CLU_095001_2_0_1"/>
<dbReference type="InParanoid" id="P02470"/>
<dbReference type="OMA" id="QQDDHGY"/>
<dbReference type="OrthoDB" id="1431247at2759"/>
<dbReference type="TreeFam" id="TF105049"/>
<dbReference type="EvolutionaryTrace" id="P02470"/>
<dbReference type="Proteomes" id="UP000009136">
    <property type="component" value="Chromosome 1"/>
</dbReference>
<dbReference type="Bgee" id="ENSBTAG00000003134">
    <property type="expression patterns" value="Expressed in pigment epithelium of eye and 14 other cell types or tissues"/>
</dbReference>
<dbReference type="GO" id="GO:0005737">
    <property type="term" value="C:cytoplasm"/>
    <property type="evidence" value="ECO:0000314"/>
    <property type="project" value="UniProtKB"/>
</dbReference>
<dbReference type="GO" id="GO:0005829">
    <property type="term" value="C:cytosol"/>
    <property type="evidence" value="ECO:0007669"/>
    <property type="project" value="Ensembl"/>
</dbReference>
<dbReference type="GO" id="GO:0005654">
    <property type="term" value="C:nucleoplasm"/>
    <property type="evidence" value="ECO:0007669"/>
    <property type="project" value="Ensembl"/>
</dbReference>
<dbReference type="GO" id="GO:0005634">
    <property type="term" value="C:nucleus"/>
    <property type="evidence" value="ECO:0000250"/>
    <property type="project" value="UniProtKB"/>
</dbReference>
<dbReference type="GO" id="GO:0032991">
    <property type="term" value="C:protein-containing complex"/>
    <property type="evidence" value="ECO:0007669"/>
    <property type="project" value="Ensembl"/>
</dbReference>
<dbReference type="GO" id="GO:0042802">
    <property type="term" value="F:identical protein binding"/>
    <property type="evidence" value="ECO:0007669"/>
    <property type="project" value="Ensembl"/>
</dbReference>
<dbReference type="GO" id="GO:0046872">
    <property type="term" value="F:metal ion binding"/>
    <property type="evidence" value="ECO:0007669"/>
    <property type="project" value="UniProtKB-KW"/>
</dbReference>
<dbReference type="GO" id="GO:0005212">
    <property type="term" value="F:structural constituent of eye lens"/>
    <property type="evidence" value="ECO:0007669"/>
    <property type="project" value="UniProtKB-KW"/>
</dbReference>
<dbReference type="GO" id="GO:0051082">
    <property type="term" value="F:unfolded protein binding"/>
    <property type="evidence" value="ECO:0000314"/>
    <property type="project" value="UniProtKB"/>
</dbReference>
<dbReference type="GO" id="GO:0007015">
    <property type="term" value="P:actin filament organization"/>
    <property type="evidence" value="ECO:0007669"/>
    <property type="project" value="Ensembl"/>
</dbReference>
<dbReference type="GO" id="GO:0060561">
    <property type="term" value="P:apoptotic process involved in morphogenesis"/>
    <property type="evidence" value="ECO:0007669"/>
    <property type="project" value="Ensembl"/>
</dbReference>
<dbReference type="GO" id="GO:0048596">
    <property type="term" value="P:embryonic camera-type eye morphogenesis"/>
    <property type="evidence" value="ECO:0007669"/>
    <property type="project" value="Ensembl"/>
</dbReference>
<dbReference type="GO" id="GO:0002088">
    <property type="term" value="P:lens development in camera-type eye"/>
    <property type="evidence" value="ECO:0000318"/>
    <property type="project" value="GO_Central"/>
</dbReference>
<dbReference type="GO" id="GO:0070309">
    <property type="term" value="P:lens fiber cell morphogenesis"/>
    <property type="evidence" value="ECO:0007669"/>
    <property type="project" value="Ensembl"/>
</dbReference>
<dbReference type="GO" id="GO:0007017">
    <property type="term" value="P:microtubule-based process"/>
    <property type="evidence" value="ECO:0007669"/>
    <property type="project" value="Ensembl"/>
</dbReference>
<dbReference type="GO" id="GO:0007005">
    <property type="term" value="P:mitochondrion organization"/>
    <property type="evidence" value="ECO:0007669"/>
    <property type="project" value="Ensembl"/>
</dbReference>
<dbReference type="GO" id="GO:0043066">
    <property type="term" value="P:negative regulation of apoptotic process"/>
    <property type="evidence" value="ECO:0000318"/>
    <property type="project" value="GO_Central"/>
</dbReference>
<dbReference type="GO" id="GO:0010629">
    <property type="term" value="P:negative regulation of gene expression"/>
    <property type="evidence" value="ECO:0007669"/>
    <property type="project" value="Ensembl"/>
</dbReference>
<dbReference type="GO" id="GO:0032387">
    <property type="term" value="P:negative regulation of intracellular transport"/>
    <property type="evidence" value="ECO:0007669"/>
    <property type="project" value="Ensembl"/>
</dbReference>
<dbReference type="GO" id="GO:0030307">
    <property type="term" value="P:positive regulation of cell growth"/>
    <property type="evidence" value="ECO:0007669"/>
    <property type="project" value="Ensembl"/>
</dbReference>
<dbReference type="GO" id="GO:0050821">
    <property type="term" value="P:protein stabilization"/>
    <property type="evidence" value="ECO:0007669"/>
    <property type="project" value="Ensembl"/>
</dbReference>
<dbReference type="GO" id="GO:0009408">
    <property type="term" value="P:response to heat"/>
    <property type="evidence" value="ECO:0000318"/>
    <property type="project" value="GO_Central"/>
</dbReference>
<dbReference type="GO" id="GO:0042542">
    <property type="term" value="P:response to hydrogen peroxide"/>
    <property type="evidence" value="ECO:0007669"/>
    <property type="project" value="Ensembl"/>
</dbReference>
<dbReference type="GO" id="GO:0001666">
    <property type="term" value="P:response to hypoxia"/>
    <property type="evidence" value="ECO:0007669"/>
    <property type="project" value="Ensembl"/>
</dbReference>
<dbReference type="GO" id="GO:0070141">
    <property type="term" value="P:response to UV-A"/>
    <property type="evidence" value="ECO:0007669"/>
    <property type="project" value="Ensembl"/>
</dbReference>
<dbReference type="GO" id="GO:0007021">
    <property type="term" value="P:tubulin complex assembly"/>
    <property type="evidence" value="ECO:0007669"/>
    <property type="project" value="Ensembl"/>
</dbReference>
<dbReference type="GO" id="GO:0007601">
    <property type="term" value="P:visual perception"/>
    <property type="evidence" value="ECO:0007669"/>
    <property type="project" value="Ensembl"/>
</dbReference>
<dbReference type="FunFam" id="2.60.40.790:FF:000008">
    <property type="entry name" value="Alpha-crystallin A chain"/>
    <property type="match status" value="1"/>
</dbReference>
<dbReference type="Gene3D" id="2.60.40.790">
    <property type="match status" value="1"/>
</dbReference>
<dbReference type="InterPro" id="IPR002068">
    <property type="entry name" value="A-crystallin/Hsp20_dom"/>
</dbReference>
<dbReference type="InterPro" id="IPR055269">
    <property type="entry name" value="Alpha-crystallin/HSP_16"/>
</dbReference>
<dbReference type="InterPro" id="IPR001436">
    <property type="entry name" value="Alpha-crystallin/sHSP_animal"/>
</dbReference>
<dbReference type="InterPro" id="IPR003090">
    <property type="entry name" value="Alpha-crystallin_N"/>
</dbReference>
<dbReference type="InterPro" id="IPR008978">
    <property type="entry name" value="HSP20-like_chaperone"/>
</dbReference>
<dbReference type="PANTHER" id="PTHR45640:SF14">
    <property type="entry name" value="ALPHA-CRYSTALLIN A CHAIN"/>
    <property type="match status" value="1"/>
</dbReference>
<dbReference type="PANTHER" id="PTHR45640">
    <property type="entry name" value="HEAT SHOCK PROTEIN HSP-12.2-RELATED"/>
    <property type="match status" value="1"/>
</dbReference>
<dbReference type="Pfam" id="PF00525">
    <property type="entry name" value="Crystallin"/>
    <property type="match status" value="1"/>
</dbReference>
<dbReference type="Pfam" id="PF00011">
    <property type="entry name" value="HSP20"/>
    <property type="match status" value="1"/>
</dbReference>
<dbReference type="PIRSF" id="PIRSF036514">
    <property type="entry name" value="Sm_HSP_B1"/>
    <property type="match status" value="1"/>
</dbReference>
<dbReference type="PRINTS" id="PR00299">
    <property type="entry name" value="ACRYSTALLIN"/>
</dbReference>
<dbReference type="SUPFAM" id="SSF49764">
    <property type="entry name" value="HSP20-like chaperones"/>
    <property type="match status" value="1"/>
</dbReference>
<dbReference type="PROSITE" id="PS01031">
    <property type="entry name" value="SHSP"/>
    <property type="match status" value="1"/>
</dbReference>
<feature type="chain" id="PRO_0000125848" description="Alpha-crystallin A chain">
    <location>
        <begin position="1"/>
        <end position="173"/>
    </location>
</feature>
<feature type="chain" id="PRO_0000226605" description="Alpha-crystallin A(1-172)">
    <location>
        <begin position="1"/>
        <end position="172"/>
    </location>
</feature>
<feature type="chain" id="PRO_0000423502" description="Alpha-crystallin A(1-168)">
    <location>
        <begin position="1"/>
        <end position="168"/>
    </location>
</feature>
<feature type="domain" description="sHSP" evidence="3">
    <location>
        <begin position="52"/>
        <end position="162"/>
    </location>
</feature>
<feature type="region of interest" description="Required for complex formation with BFSP1 and BFSP2" evidence="2">
    <location>
        <begin position="1"/>
        <end position="63"/>
    </location>
</feature>
<feature type="region of interest" description="Disordered" evidence="4">
    <location>
        <begin position="144"/>
        <end position="173"/>
    </location>
</feature>
<feature type="region of interest" description="Important for oligomerization">
    <location>
        <begin position="157"/>
        <end position="163"/>
    </location>
</feature>
<feature type="compositionally biased region" description="Basic and acidic residues" evidence="4">
    <location>
        <begin position="153"/>
        <end position="167"/>
    </location>
</feature>
<feature type="binding site" evidence="7">
    <location>
        <position position="100"/>
    </location>
    <ligand>
        <name>Zn(2+)</name>
        <dbReference type="ChEBI" id="CHEBI:29105"/>
        <label>1</label>
    </ligand>
</feature>
<feature type="binding site" evidence="7">
    <location>
        <position position="102"/>
    </location>
    <ligand>
        <name>Zn(2+)</name>
        <dbReference type="ChEBI" id="CHEBI:29105"/>
        <label>1</label>
    </ligand>
</feature>
<feature type="binding site" evidence="10">
    <location>
        <position position="107"/>
    </location>
    <ligand>
        <name>Zn(2+)</name>
        <dbReference type="ChEBI" id="CHEBI:29105"/>
        <label>2</label>
    </ligand>
</feature>
<feature type="binding site" evidence="10">
    <location>
        <position position="154"/>
    </location>
    <ligand>
        <name>Zn(2+)</name>
        <dbReference type="ChEBI" id="CHEBI:29105"/>
        <label>3</label>
    </ligand>
</feature>
<feature type="site" description="Not glycated">
    <location>
        <position position="70"/>
    </location>
</feature>
<feature type="site" description="Not glycated">
    <location>
        <position position="88"/>
    </location>
</feature>
<feature type="site" description="Not glycated">
    <location>
        <position position="99"/>
    </location>
</feature>
<feature type="site" description="Not glycated">
    <location>
        <position position="145"/>
    </location>
</feature>
<feature type="site" description="Not glycated">
    <location>
        <position position="166"/>
    </location>
</feature>
<feature type="modified residue" description="N-acetylmethionine" evidence="6">
    <location>
        <position position="1"/>
    </location>
</feature>
<feature type="modified residue" description="Deamidated glutamine; partial" evidence="1">
    <location>
        <position position="6"/>
    </location>
</feature>
<feature type="modified residue" description="Phosphoserine" evidence="2">
    <location>
        <position position="45"/>
    </location>
</feature>
<feature type="modified residue" description="Deamidated glutamine; partial" evidence="1">
    <location>
        <position position="50"/>
    </location>
</feature>
<feature type="modified residue" description="N6-acetyllysine" evidence="2">
    <location>
        <position position="70"/>
    </location>
</feature>
<feature type="modified residue" description="Deamidated glutamine; partial" evidence="1">
    <location>
        <position position="90"/>
    </location>
</feature>
<feature type="modified residue" description="N6-acetyllysine" evidence="2">
    <location>
        <position position="99"/>
    </location>
</feature>
<feature type="modified residue" description="Deamidated asparagine; partial" evidence="1">
    <location>
        <position position="101"/>
    </location>
</feature>
<feature type="modified residue" description="Phosphoserine" evidence="6">
    <location>
        <position position="122"/>
    </location>
</feature>
<feature type="modified residue" description="Deamidated asparagine; partial" evidence="1">
    <location>
        <position position="123"/>
    </location>
</feature>
<feature type="glycosylation site" description="N-linked (Glc) (glycation) lysine" evidence="8">
    <location>
        <position position="11"/>
    </location>
</feature>
<feature type="glycosylation site" description="N-linked (Glc) (glycation) lysine" evidence="8">
    <location>
        <position position="78"/>
    </location>
</feature>
<feature type="glycosylation site" id="CAR_000056" description="O-linked (GlcNAc) serine" evidence="5">
    <location>
        <position position="162"/>
    </location>
</feature>
<feature type="strand" evidence="11">
    <location>
        <begin position="61"/>
        <end position="66"/>
    </location>
</feature>
<feature type="strand" evidence="11">
    <location>
        <begin position="68"/>
        <end position="76"/>
    </location>
</feature>
<feature type="helix" evidence="11">
    <location>
        <begin position="82"/>
        <end position="84"/>
    </location>
</feature>
<feature type="strand" evidence="11">
    <location>
        <begin position="85"/>
        <end position="90"/>
    </location>
</feature>
<feature type="strand" evidence="11">
    <location>
        <begin position="93"/>
        <end position="104"/>
    </location>
</feature>
<feature type="turn" evidence="11">
    <location>
        <begin position="105"/>
        <end position="107"/>
    </location>
</feature>
<feature type="strand" evidence="11">
    <location>
        <begin position="108"/>
        <end position="119"/>
    </location>
</feature>
<feature type="strand" evidence="11">
    <location>
        <begin position="130"/>
        <end position="133"/>
    </location>
</feature>
<feature type="strand" evidence="11">
    <location>
        <begin position="137"/>
        <end position="145"/>
    </location>
</feature>
<feature type="turn" evidence="11">
    <location>
        <begin position="150"/>
        <end position="153"/>
    </location>
</feature>
<feature type="strand" evidence="11">
    <location>
        <begin position="154"/>
        <end position="156"/>
    </location>
</feature>
<keyword id="KW-0002">3D-structure</keyword>
<keyword id="KW-0007">Acetylation</keyword>
<keyword id="KW-0143">Chaperone</keyword>
<keyword id="KW-0963">Cytoplasm</keyword>
<keyword id="KW-0903">Direct protein sequencing</keyword>
<keyword id="KW-0273">Eye lens protein</keyword>
<keyword id="KW-0971">Glycation</keyword>
<keyword id="KW-0325">Glycoprotein</keyword>
<keyword id="KW-0479">Metal-binding</keyword>
<keyword id="KW-0488">Methylation</keyword>
<keyword id="KW-0539">Nucleus</keyword>
<keyword id="KW-0597">Phosphoprotein</keyword>
<keyword id="KW-1185">Reference proteome</keyword>
<keyword id="KW-0862">Zinc</keyword>
<sequence>MDIAIQHPWFKRTLGPFYPSRLFDQFFGEGLFEYDLLPFLSSTISPYYRQSLFRTVLDSGISEVRSDRDKFVIFLDVKHFSPEDLTVKVQEDFVEIHGKHNERQDDHGYISREFHRRYRLPSNVDQSALSCSLSADGMLTFSGPKIPSGVDAGHSERAIPVSREEKPSSAPSS</sequence>
<gene>
    <name type="primary">CRYAA</name>
    <name type="synonym">CRYA1</name>
</gene>
<protein>
    <recommendedName>
        <fullName>Alpha-crystallin A chain</fullName>
    </recommendedName>
    <component>
        <recommendedName>
            <fullName>Alpha-crystallin A(1-172)</fullName>
        </recommendedName>
    </component>
    <component>
        <recommendedName>
            <fullName>Alpha-crystallin A(1-168)</fullName>
        </recommendedName>
    </component>
</protein>
<name>CRYAA_BOVIN</name>
<organism>
    <name type="scientific">Bos taurus</name>
    <name type="common">Bovine</name>
    <dbReference type="NCBI Taxonomy" id="9913"/>
    <lineage>
        <taxon>Eukaryota</taxon>
        <taxon>Metazoa</taxon>
        <taxon>Chordata</taxon>
        <taxon>Craniata</taxon>
        <taxon>Vertebrata</taxon>
        <taxon>Euteleostomi</taxon>
        <taxon>Mammalia</taxon>
        <taxon>Eutheria</taxon>
        <taxon>Laurasiatheria</taxon>
        <taxon>Artiodactyla</taxon>
        <taxon>Ruminantia</taxon>
        <taxon>Pecora</taxon>
        <taxon>Bovidae</taxon>
        <taxon>Bovinae</taxon>
        <taxon>Bos</taxon>
    </lineage>
</organism>
<evidence type="ECO:0000250" key="1"/>
<evidence type="ECO:0000250" key="2">
    <source>
        <dbReference type="UniProtKB" id="P02489"/>
    </source>
</evidence>
<evidence type="ECO:0000255" key="3">
    <source>
        <dbReference type="PROSITE-ProRule" id="PRU00285"/>
    </source>
</evidence>
<evidence type="ECO:0000256" key="4">
    <source>
        <dbReference type="SAM" id="MobiDB-lite"/>
    </source>
</evidence>
<evidence type="ECO:0000269" key="5">
    <source>
    </source>
</evidence>
<evidence type="ECO:0000269" key="6">
    <source>
    </source>
</evidence>
<evidence type="ECO:0000269" key="7">
    <source>
    </source>
</evidence>
<evidence type="ECO:0000269" key="8">
    <source>
    </source>
</evidence>
<evidence type="ECO:0000269" key="9">
    <source>
    </source>
</evidence>
<evidence type="ECO:0000305" key="10">
    <source>
    </source>
</evidence>
<evidence type="ECO:0007829" key="11">
    <source>
        <dbReference type="PDB" id="3L1E"/>
    </source>
</evidence>
<comment type="function">
    <text evidence="2 7">Contributes to the transparency and refractive index of the lens (By similarity). Acts as a chaperone, preventing aggregation of various proteins under a wide range of stress conditions (PubMed:20440841). Required for the correct formation of lens intermediate filaments as part of a complex composed of BFSP1, BFSP2 and CRYAA (By similarity).</text>
</comment>
<comment type="subunit">
    <text evidence="2 7">Heteromer composed of three CRYAA and one CRYAB subunits (By similarity). Inter-subunit bridging via zinc ions enhances stability, which is crucial as there is no protein turn over in the lens (By similarity) (PubMed:20440841). Can also form homodimers and homotetramers (dimers of dimers) which serve as the building blocks of homooligomers. Within homooligomers, the zinc-binding motif is created from residues of 3 different molecules. His-100 and Glu-102 from one molecule are ligands of the zinc ion, and His-107 and His-154 residues from additional molecules complete the site with tetrahedral coordination geometry (PubMed:20440841). Part of a complex required for lens intermediate filament formation composed of BFSP1, BFSP2 and CRYAA (By similarity).</text>
</comment>
<comment type="interaction">
    <interactant intactId="EBI-15796552">
        <id>P02470</id>
    </interactant>
    <interactant intactId="EBI-7824601">
        <id>P02510</id>
        <label>CRYAB</label>
    </interactant>
    <organismsDiffer>false</organismsDiffer>
    <experiments>4</experiments>
</comment>
<comment type="subcellular location">
    <subcellularLocation>
        <location evidence="2">Cytoplasm</location>
    </subcellularLocation>
    <subcellularLocation>
        <location evidence="2">Nucleus</location>
    </subcellularLocation>
    <text evidence="2">Translocates to the nucleus during heat shock and resides in sub-nuclear structures known as SC35 speckles or nuclear splicing speckles.</text>
</comment>
<comment type="PTM">
    <text evidence="2">Acetylation at Lys-70 may increase chaperone activity.</text>
</comment>
<comment type="PTM">
    <text evidence="9">Undergoes age-dependent proteolytical cleavage at the C-terminus.</text>
</comment>
<comment type="similarity">
    <text evidence="3">Belongs to the small heat shock protein (HSP20) family.</text>
</comment>
<reference key="1">
    <citation type="journal article" date="1973" name="Eur. J. Biochem.">
        <title>The amino-acid sequence of the alphaA2 chain of bovine alpha-crystallin.</title>
        <authorList>
            <person name="van der Ouderaa F.J."/>
            <person name="de Jong W.W."/>
            <person name="Bloemendal H."/>
        </authorList>
    </citation>
    <scope>PROTEIN SEQUENCE</scope>
</reference>
<reference key="2">
    <citation type="journal article" date="1987" name="Biochem. Biophys. Res. Commun.">
        <title>Nucleotide sequence of a bovine lens alpha A-crystallin cDNA.</title>
        <authorList>
            <person name="Hay R.E."/>
            <person name="Petrash J.M."/>
        </authorList>
    </citation>
    <scope>NUCLEOTIDE SEQUENCE [MRNA]</scope>
</reference>
<reference key="3">
    <citation type="journal article" date="1991" name="Anal. Biochem.">
        <title>Elucidation of the primary structures of proteins by mass spectrometry.</title>
        <authorList>
            <person name="Smith J.B."/>
            <person name="Thevenon-Emeric G."/>
            <person name="Simth D.L."/>
            <person name="Green B."/>
        </authorList>
    </citation>
    <scope>PROTEIN SEQUENCE</scope>
    <scope>ACETYLATION AT MET-1</scope>
    <scope>PHOSPHORYLATION AT SER-122</scope>
</reference>
<reference key="4">
    <citation type="journal article" date="1992" name="J. Biol. Chem.">
        <title>Vertebrate lens alpha-crystallins are modified by O-linked N-acetylglucosamine.</title>
        <authorList>
            <person name="Roquemore E.P."/>
            <person name="Dell A."/>
            <person name="Morris H.R."/>
            <person name="Panico M."/>
            <person name="Reason A.J."/>
            <person name="Savoy L.-A."/>
            <person name="Wistow G.J."/>
            <person name="Zigler J.S. Jr."/>
            <person name="Earles B.J."/>
            <person name="Hart G.W."/>
        </authorList>
    </citation>
    <scope>GLYCOSYLATION AT SER-162</scope>
</reference>
<reference key="5">
    <citation type="journal article" date="1994" name="Biochem. Biophys. Res. Commun.">
        <title>Site selectivity in the glycation of alpha A- and alpha B-crystallins by glucose.</title>
        <authorList>
            <person name="Abraham E.C."/>
            <person name="Cherian M."/>
            <person name="Smith J.B."/>
        </authorList>
    </citation>
    <scope>GLYCATION AT LYS-11 AND LYS-78</scope>
    <scope>IDENTIFICATION BY MASS SPECTROMETRY</scope>
</reference>
<reference key="6">
    <citation type="journal article" date="1995" name="Curr. Eye Res.">
        <title>Identification of the in vivo truncation sites at the C-terminal region of alpha-A crystallin from aged bovine and human lens.</title>
        <authorList>
            <person name="Takemoto L.J."/>
        </authorList>
    </citation>
    <scope>PROTEOLYTIC PROCESSING</scope>
</reference>
<reference key="7">
    <citation type="journal article" date="2010" name="Protein Sci.">
        <title>Crystal structures of truncated alphaA and alphaB crystallins reveal structural mechanisms of polydispersity important for eye lens function.</title>
        <authorList>
            <person name="Laganowsky A."/>
            <person name="Benesch J.L."/>
            <person name="Landau M."/>
            <person name="Ding L."/>
            <person name="Sawaya M.R."/>
            <person name="Cascio D."/>
            <person name="Huang Q."/>
            <person name="Robinson C.V."/>
            <person name="Horwitz J."/>
            <person name="Eisenberg D."/>
        </authorList>
    </citation>
    <scope>X-RAY CRYSTALLOGRAPHY (1.15 ANGSTROMS) OF 59-163 IN COMPLEX WITH ZINC</scope>
    <scope>FUNCTION</scope>
    <scope>SUBUNIT</scope>
</reference>
<accession>P02470</accession>
<proteinExistence type="evidence at protein level"/>